<dbReference type="EC" id="3.6.5.-" evidence="1"/>
<dbReference type="EMBL" id="AM746676">
    <property type="protein sequence ID" value="CAN91957.1"/>
    <property type="molecule type" value="Genomic_DNA"/>
</dbReference>
<dbReference type="RefSeq" id="WP_012234434.1">
    <property type="nucleotide sequence ID" value="NC_010162.1"/>
</dbReference>
<dbReference type="SMR" id="A9FJF8"/>
<dbReference type="STRING" id="448385.sce1799"/>
<dbReference type="KEGG" id="scl:sce1799"/>
<dbReference type="eggNOG" id="COG0536">
    <property type="taxonomic scope" value="Bacteria"/>
</dbReference>
<dbReference type="HOGENOM" id="CLU_011747_2_0_7"/>
<dbReference type="OrthoDB" id="9807318at2"/>
<dbReference type="BioCyc" id="SCEL448385:SCE_RS09245-MONOMER"/>
<dbReference type="Proteomes" id="UP000002139">
    <property type="component" value="Chromosome"/>
</dbReference>
<dbReference type="GO" id="GO:0005737">
    <property type="term" value="C:cytoplasm"/>
    <property type="evidence" value="ECO:0007669"/>
    <property type="project" value="UniProtKB-SubCell"/>
</dbReference>
<dbReference type="GO" id="GO:0005525">
    <property type="term" value="F:GTP binding"/>
    <property type="evidence" value="ECO:0007669"/>
    <property type="project" value="UniProtKB-UniRule"/>
</dbReference>
<dbReference type="GO" id="GO:0003924">
    <property type="term" value="F:GTPase activity"/>
    <property type="evidence" value="ECO:0007669"/>
    <property type="project" value="UniProtKB-UniRule"/>
</dbReference>
<dbReference type="GO" id="GO:0000287">
    <property type="term" value="F:magnesium ion binding"/>
    <property type="evidence" value="ECO:0007669"/>
    <property type="project" value="InterPro"/>
</dbReference>
<dbReference type="GO" id="GO:0042254">
    <property type="term" value="P:ribosome biogenesis"/>
    <property type="evidence" value="ECO:0007669"/>
    <property type="project" value="UniProtKB-UniRule"/>
</dbReference>
<dbReference type="CDD" id="cd01898">
    <property type="entry name" value="Obg"/>
    <property type="match status" value="1"/>
</dbReference>
<dbReference type="FunFam" id="2.70.210.12:FF:000001">
    <property type="entry name" value="GTPase Obg"/>
    <property type="match status" value="1"/>
</dbReference>
<dbReference type="Gene3D" id="2.70.210.12">
    <property type="entry name" value="GTP1/OBG domain"/>
    <property type="match status" value="1"/>
</dbReference>
<dbReference type="Gene3D" id="3.40.50.300">
    <property type="entry name" value="P-loop containing nucleotide triphosphate hydrolases"/>
    <property type="match status" value="1"/>
</dbReference>
<dbReference type="HAMAP" id="MF_01454">
    <property type="entry name" value="GTPase_Obg"/>
    <property type="match status" value="1"/>
</dbReference>
<dbReference type="InterPro" id="IPR031167">
    <property type="entry name" value="G_OBG"/>
</dbReference>
<dbReference type="InterPro" id="IPR006073">
    <property type="entry name" value="GTP-bd"/>
</dbReference>
<dbReference type="InterPro" id="IPR014100">
    <property type="entry name" value="GTP-bd_Obg/CgtA"/>
</dbReference>
<dbReference type="InterPro" id="IPR006074">
    <property type="entry name" value="GTP1-OBG_CS"/>
</dbReference>
<dbReference type="InterPro" id="IPR006169">
    <property type="entry name" value="GTP1_OBG_dom"/>
</dbReference>
<dbReference type="InterPro" id="IPR036726">
    <property type="entry name" value="GTP1_OBG_dom_sf"/>
</dbReference>
<dbReference type="InterPro" id="IPR045086">
    <property type="entry name" value="OBG_GTPase"/>
</dbReference>
<dbReference type="InterPro" id="IPR027417">
    <property type="entry name" value="P-loop_NTPase"/>
</dbReference>
<dbReference type="NCBIfam" id="TIGR02729">
    <property type="entry name" value="Obg_CgtA"/>
    <property type="match status" value="1"/>
</dbReference>
<dbReference type="NCBIfam" id="NF008955">
    <property type="entry name" value="PRK12297.1"/>
    <property type="match status" value="1"/>
</dbReference>
<dbReference type="NCBIfam" id="NF008956">
    <property type="entry name" value="PRK12299.1"/>
    <property type="match status" value="1"/>
</dbReference>
<dbReference type="PANTHER" id="PTHR11702">
    <property type="entry name" value="DEVELOPMENTALLY REGULATED GTP-BINDING PROTEIN-RELATED"/>
    <property type="match status" value="1"/>
</dbReference>
<dbReference type="PANTHER" id="PTHR11702:SF31">
    <property type="entry name" value="MITOCHONDRIAL RIBOSOME-ASSOCIATED GTPASE 2"/>
    <property type="match status" value="1"/>
</dbReference>
<dbReference type="Pfam" id="PF01018">
    <property type="entry name" value="GTP1_OBG"/>
    <property type="match status" value="1"/>
</dbReference>
<dbReference type="Pfam" id="PF01926">
    <property type="entry name" value="MMR_HSR1"/>
    <property type="match status" value="1"/>
</dbReference>
<dbReference type="PIRSF" id="PIRSF002401">
    <property type="entry name" value="GTP_bd_Obg/CgtA"/>
    <property type="match status" value="1"/>
</dbReference>
<dbReference type="PRINTS" id="PR00326">
    <property type="entry name" value="GTP1OBG"/>
</dbReference>
<dbReference type="SUPFAM" id="SSF82051">
    <property type="entry name" value="Obg GTP-binding protein N-terminal domain"/>
    <property type="match status" value="1"/>
</dbReference>
<dbReference type="SUPFAM" id="SSF52540">
    <property type="entry name" value="P-loop containing nucleoside triphosphate hydrolases"/>
    <property type="match status" value="1"/>
</dbReference>
<dbReference type="PROSITE" id="PS51710">
    <property type="entry name" value="G_OBG"/>
    <property type="match status" value="1"/>
</dbReference>
<dbReference type="PROSITE" id="PS00905">
    <property type="entry name" value="GTP1_OBG"/>
    <property type="match status" value="1"/>
</dbReference>
<dbReference type="PROSITE" id="PS51883">
    <property type="entry name" value="OBG"/>
    <property type="match status" value="1"/>
</dbReference>
<feature type="chain" id="PRO_0000386265" description="GTPase Obg">
    <location>
        <begin position="1"/>
        <end position="346"/>
    </location>
</feature>
<feature type="domain" description="Obg" evidence="2">
    <location>
        <begin position="1"/>
        <end position="159"/>
    </location>
</feature>
<feature type="domain" description="OBG-type G" evidence="1">
    <location>
        <begin position="160"/>
        <end position="336"/>
    </location>
</feature>
<feature type="region of interest" description="Disordered" evidence="3">
    <location>
        <begin position="122"/>
        <end position="147"/>
    </location>
</feature>
<feature type="compositionally biased region" description="Basic and acidic residues" evidence="3">
    <location>
        <begin position="132"/>
        <end position="147"/>
    </location>
</feature>
<feature type="binding site" evidence="1">
    <location>
        <begin position="166"/>
        <end position="173"/>
    </location>
    <ligand>
        <name>GTP</name>
        <dbReference type="ChEBI" id="CHEBI:37565"/>
    </ligand>
</feature>
<feature type="binding site" evidence="1">
    <location>
        <position position="173"/>
    </location>
    <ligand>
        <name>Mg(2+)</name>
        <dbReference type="ChEBI" id="CHEBI:18420"/>
    </ligand>
</feature>
<feature type="binding site" evidence="1">
    <location>
        <begin position="191"/>
        <end position="195"/>
    </location>
    <ligand>
        <name>GTP</name>
        <dbReference type="ChEBI" id="CHEBI:37565"/>
    </ligand>
</feature>
<feature type="binding site" evidence="1">
    <location>
        <position position="193"/>
    </location>
    <ligand>
        <name>Mg(2+)</name>
        <dbReference type="ChEBI" id="CHEBI:18420"/>
    </ligand>
</feature>
<feature type="binding site" evidence="1">
    <location>
        <begin position="218"/>
        <end position="221"/>
    </location>
    <ligand>
        <name>GTP</name>
        <dbReference type="ChEBI" id="CHEBI:37565"/>
    </ligand>
</feature>
<feature type="binding site" evidence="1">
    <location>
        <begin position="288"/>
        <end position="291"/>
    </location>
    <ligand>
        <name>GTP</name>
        <dbReference type="ChEBI" id="CHEBI:37565"/>
    </ligand>
</feature>
<feature type="binding site" evidence="1">
    <location>
        <begin position="317"/>
        <end position="319"/>
    </location>
    <ligand>
        <name>GTP</name>
        <dbReference type="ChEBI" id="CHEBI:37565"/>
    </ligand>
</feature>
<accession>A9FJF8</accession>
<protein>
    <recommendedName>
        <fullName evidence="1">GTPase Obg</fullName>
        <ecNumber evidence="1">3.6.5.-</ecNumber>
    </recommendedName>
    <alternativeName>
        <fullName evidence="1">GTP-binding protein Obg</fullName>
    </alternativeName>
</protein>
<comment type="function">
    <text evidence="1">An essential GTPase which binds GTP, GDP and possibly (p)ppGpp with moderate affinity, with high nucleotide exchange rates and a fairly low GTP hydrolysis rate. Plays a role in control of the cell cycle, stress response, ribosome biogenesis and in those bacteria that undergo differentiation, in morphogenesis control.</text>
</comment>
<comment type="cofactor">
    <cofactor evidence="1">
        <name>Mg(2+)</name>
        <dbReference type="ChEBI" id="CHEBI:18420"/>
    </cofactor>
</comment>
<comment type="subunit">
    <text evidence="1">Monomer.</text>
</comment>
<comment type="subcellular location">
    <subcellularLocation>
        <location evidence="1">Cytoplasm</location>
    </subcellularLocation>
</comment>
<comment type="similarity">
    <text evidence="1">Belongs to the TRAFAC class OBG-HflX-like GTPase superfamily. OBG GTPase family.</text>
</comment>
<gene>
    <name evidence="1" type="primary">obg</name>
    <name type="ordered locus">sce1799</name>
</gene>
<organism>
    <name type="scientific">Sorangium cellulosum (strain So ce56)</name>
    <name type="common">Polyangium cellulosum (strain So ce56)</name>
    <dbReference type="NCBI Taxonomy" id="448385"/>
    <lineage>
        <taxon>Bacteria</taxon>
        <taxon>Pseudomonadati</taxon>
        <taxon>Myxococcota</taxon>
        <taxon>Polyangia</taxon>
        <taxon>Polyangiales</taxon>
        <taxon>Polyangiaceae</taxon>
        <taxon>Sorangium</taxon>
    </lineage>
</organism>
<keyword id="KW-0963">Cytoplasm</keyword>
<keyword id="KW-0342">GTP-binding</keyword>
<keyword id="KW-0378">Hydrolase</keyword>
<keyword id="KW-0460">Magnesium</keyword>
<keyword id="KW-0479">Metal-binding</keyword>
<keyword id="KW-0547">Nucleotide-binding</keyword>
<keyword id="KW-1185">Reference proteome</keyword>
<name>OBG_SORC5</name>
<reference key="1">
    <citation type="journal article" date="2007" name="Nat. Biotechnol.">
        <title>Complete genome sequence of the myxobacterium Sorangium cellulosum.</title>
        <authorList>
            <person name="Schneiker S."/>
            <person name="Perlova O."/>
            <person name="Kaiser O."/>
            <person name="Gerth K."/>
            <person name="Alici A."/>
            <person name="Altmeyer M.O."/>
            <person name="Bartels D."/>
            <person name="Bekel T."/>
            <person name="Beyer S."/>
            <person name="Bode E."/>
            <person name="Bode H.B."/>
            <person name="Bolten C.J."/>
            <person name="Choudhuri J.V."/>
            <person name="Doss S."/>
            <person name="Elnakady Y.A."/>
            <person name="Frank B."/>
            <person name="Gaigalat L."/>
            <person name="Goesmann A."/>
            <person name="Groeger C."/>
            <person name="Gross F."/>
            <person name="Jelsbak L."/>
            <person name="Jelsbak L."/>
            <person name="Kalinowski J."/>
            <person name="Kegler C."/>
            <person name="Knauber T."/>
            <person name="Konietzny S."/>
            <person name="Kopp M."/>
            <person name="Krause L."/>
            <person name="Krug D."/>
            <person name="Linke B."/>
            <person name="Mahmud T."/>
            <person name="Martinez-Arias R."/>
            <person name="McHardy A.C."/>
            <person name="Merai M."/>
            <person name="Meyer F."/>
            <person name="Mormann S."/>
            <person name="Munoz-Dorado J."/>
            <person name="Perez J."/>
            <person name="Pradella S."/>
            <person name="Rachid S."/>
            <person name="Raddatz G."/>
            <person name="Rosenau F."/>
            <person name="Rueckert C."/>
            <person name="Sasse F."/>
            <person name="Scharfe M."/>
            <person name="Schuster S.C."/>
            <person name="Suen G."/>
            <person name="Treuner-Lange A."/>
            <person name="Velicer G.J."/>
            <person name="Vorholter F.-J."/>
            <person name="Weissman K.J."/>
            <person name="Welch R.D."/>
            <person name="Wenzel S.C."/>
            <person name="Whitworth D.E."/>
            <person name="Wilhelm S."/>
            <person name="Wittmann C."/>
            <person name="Bloecker H."/>
            <person name="Puehler A."/>
            <person name="Mueller R."/>
        </authorList>
    </citation>
    <scope>NUCLEOTIDE SEQUENCE [LARGE SCALE GENOMIC DNA]</scope>
    <source>
        <strain>So ce56</strain>
    </source>
</reference>
<proteinExistence type="inferred from homology"/>
<evidence type="ECO:0000255" key="1">
    <source>
        <dbReference type="HAMAP-Rule" id="MF_01454"/>
    </source>
</evidence>
<evidence type="ECO:0000255" key="2">
    <source>
        <dbReference type="PROSITE-ProRule" id="PRU01231"/>
    </source>
</evidence>
<evidence type="ECO:0000256" key="3">
    <source>
        <dbReference type="SAM" id="MobiDB-lite"/>
    </source>
</evidence>
<sequence>MRFVDRCRLKVIAGDGGNGAIAFRREKYIPFGGPAGGDGGRGGDVVFVGDGGLSTLLDFTYARTLEADRGEHGMGSDCHGRAGADRVEKLPVGTQIFDAESGELLADVTEHGQRVIVARGGKGGRGNLHFKSPHDRAPRRAEPGEPGEARELRLELKVLADVGLLGFPNAGKSTFVAAVSAARPKIGDYPFTTLTPILGMVEIGGGVRAGGSSFVIADIPGLVPGASEGVGLGIQFLRHVERTRALLHLVTLDPGEGREPLADYRALRKELKKFSPEIAERPEIVVLTKADLTEVRDAYPKLKARFAKAKVKLHLISAATGEGVPELVRELAALARKREEPAEQDG</sequence>